<keyword id="KW-0066">ATP synthesis</keyword>
<keyword id="KW-0138">CF(0)</keyword>
<keyword id="KW-0150">Chloroplast</keyword>
<keyword id="KW-0375">Hydrogen ion transport</keyword>
<keyword id="KW-0406">Ion transport</keyword>
<keyword id="KW-0472">Membrane</keyword>
<keyword id="KW-0934">Plastid</keyword>
<keyword id="KW-0793">Thylakoid</keyword>
<keyword id="KW-0812">Transmembrane</keyword>
<keyword id="KW-1133">Transmembrane helix</keyword>
<keyword id="KW-0813">Transport</keyword>
<comment type="function">
    <text evidence="1">F(1)F(0) ATP synthase produces ATP from ADP in the presence of a proton or sodium gradient. F-type ATPases consist of two structural domains, F(1) containing the extramembraneous catalytic core and F(0) containing the membrane proton channel, linked together by a central stalk and a peripheral stalk. During catalysis, ATP synthesis in the catalytic domain of F(1) is coupled via a rotary mechanism of the central stalk subunits to proton translocation.</text>
</comment>
<comment type="function">
    <text evidence="1">Component of the F(0) channel, it forms part of the peripheral stalk, linking F(1) to F(0).</text>
</comment>
<comment type="subunit">
    <text evidence="1">F-type ATPases have 2 components, F(1) - the catalytic core - and F(0) - the membrane proton channel. F(1) has five subunits: alpha(3), beta(3), gamma(1), delta(1), epsilon(1). F(0) has four main subunits: a(1), b(1), b'(1) and c(10-14). The alpha and beta chains form an alternating ring which encloses part of the gamma chain. F(1) is attached to F(0) by a central stalk formed by the gamma and epsilon chains, while a peripheral stalk is formed by the delta, b and b' chains.</text>
</comment>
<comment type="subcellular location">
    <subcellularLocation>
        <location evidence="1">Plastid</location>
        <location evidence="1">Chloroplast thylakoid membrane</location>
        <topology evidence="1">Single-pass membrane protein</topology>
    </subcellularLocation>
</comment>
<comment type="miscellaneous">
    <text>In plastids the F-type ATPase is also known as CF(1)CF(0).</text>
</comment>
<comment type="similarity">
    <text evidence="1">Belongs to the ATPase B chain family.</text>
</comment>
<gene>
    <name evidence="1" type="primary">atpF</name>
</gene>
<reference key="1">
    <citation type="journal article" date="2006" name="Genes Genet. Syst.">
        <title>Complete nucleotide sequence of the cotton (Gossypium barbadense L.) chloroplast genome with a comparative analysis of sequences among 9 dicot plants.</title>
        <authorList>
            <person name="Ibrahim R.I.H."/>
            <person name="Azuma J."/>
            <person name="Sakamoto M."/>
        </authorList>
    </citation>
    <scope>NUCLEOTIDE SEQUENCE [LARGE SCALE GENOMIC DNA]</scope>
</reference>
<sequence length="184" mass="20870">MKNVTDSFVSLGHWPSAGSFGVNTDILATNPINLSVVLGVLIFFGKGVLSDLLDNRKERILNTIRNSEELRGGAIERLEKARARLRKVEMEADQFRVNGYSEIEREKLNLINSTYKILEQLENYKNETIYFEQQRAINQVRQRVFQQALQGALGTLNSSLNNELHLRTISANIGLFGVMKEITD</sequence>
<geneLocation type="chloroplast"/>
<organism>
    <name type="scientific">Gossypium barbadense</name>
    <name type="common">Sea Island cotton</name>
    <name type="synonym">Hibiscus barbadensis</name>
    <dbReference type="NCBI Taxonomy" id="3634"/>
    <lineage>
        <taxon>Eukaryota</taxon>
        <taxon>Viridiplantae</taxon>
        <taxon>Streptophyta</taxon>
        <taxon>Embryophyta</taxon>
        <taxon>Tracheophyta</taxon>
        <taxon>Spermatophyta</taxon>
        <taxon>Magnoliopsida</taxon>
        <taxon>eudicotyledons</taxon>
        <taxon>Gunneridae</taxon>
        <taxon>Pentapetalae</taxon>
        <taxon>rosids</taxon>
        <taxon>malvids</taxon>
        <taxon>Malvales</taxon>
        <taxon>Malvaceae</taxon>
        <taxon>Malvoideae</taxon>
        <taxon>Gossypium</taxon>
    </lineage>
</organism>
<feature type="chain" id="PRO_0000368935" description="ATP synthase subunit b, chloroplastic">
    <location>
        <begin position="1"/>
        <end position="184"/>
    </location>
</feature>
<feature type="transmembrane region" description="Helical" evidence="1">
    <location>
        <begin position="27"/>
        <end position="49"/>
    </location>
</feature>
<accession>A0ZZ21</accession>
<name>ATPF_GOSBA</name>
<evidence type="ECO:0000255" key="1">
    <source>
        <dbReference type="HAMAP-Rule" id="MF_01398"/>
    </source>
</evidence>
<proteinExistence type="inferred from homology"/>
<dbReference type="EMBL" id="AP009123">
    <property type="protein sequence ID" value="BAF41233.1"/>
    <property type="molecule type" value="Genomic_DNA"/>
</dbReference>
<dbReference type="RefSeq" id="YP_913173.1">
    <property type="nucleotide sequence ID" value="NC_008641.1"/>
</dbReference>
<dbReference type="SMR" id="A0ZZ21"/>
<dbReference type="GeneID" id="4575187"/>
<dbReference type="GO" id="GO:0009535">
    <property type="term" value="C:chloroplast thylakoid membrane"/>
    <property type="evidence" value="ECO:0007669"/>
    <property type="project" value="UniProtKB-SubCell"/>
</dbReference>
<dbReference type="GO" id="GO:0045259">
    <property type="term" value="C:proton-transporting ATP synthase complex"/>
    <property type="evidence" value="ECO:0007669"/>
    <property type="project" value="UniProtKB-KW"/>
</dbReference>
<dbReference type="GO" id="GO:0046933">
    <property type="term" value="F:proton-transporting ATP synthase activity, rotational mechanism"/>
    <property type="evidence" value="ECO:0007669"/>
    <property type="project" value="UniProtKB-UniRule"/>
</dbReference>
<dbReference type="CDD" id="cd06503">
    <property type="entry name" value="ATP-synt_Fo_b"/>
    <property type="match status" value="1"/>
</dbReference>
<dbReference type="HAMAP" id="MF_01398">
    <property type="entry name" value="ATP_synth_b_bprime"/>
    <property type="match status" value="1"/>
</dbReference>
<dbReference type="InterPro" id="IPR002146">
    <property type="entry name" value="ATP_synth_b/b'su_bac/chlpt"/>
</dbReference>
<dbReference type="PANTHER" id="PTHR34264">
    <property type="entry name" value="ATP SYNTHASE SUBUNIT B, CHLOROPLASTIC"/>
    <property type="match status" value="1"/>
</dbReference>
<dbReference type="PANTHER" id="PTHR34264:SF3">
    <property type="entry name" value="ATP SYNTHASE SUBUNIT B, CHLOROPLASTIC"/>
    <property type="match status" value="1"/>
</dbReference>
<dbReference type="Pfam" id="PF00430">
    <property type="entry name" value="ATP-synt_B"/>
    <property type="match status" value="1"/>
</dbReference>
<protein>
    <recommendedName>
        <fullName evidence="1">ATP synthase subunit b, chloroplastic</fullName>
    </recommendedName>
    <alternativeName>
        <fullName evidence="1">ATP synthase F(0) sector subunit b</fullName>
    </alternativeName>
    <alternativeName>
        <fullName evidence="1">ATPase subunit I</fullName>
    </alternativeName>
</protein>